<name>Y152_LACLM</name>
<dbReference type="EMBL" id="AM406671">
    <property type="protein sequence ID" value="CAL96759.1"/>
    <property type="molecule type" value="Genomic_DNA"/>
</dbReference>
<dbReference type="RefSeq" id="WP_003131822.1">
    <property type="nucleotide sequence ID" value="NZ_WJVF01000001.1"/>
</dbReference>
<dbReference type="STRING" id="416870.llmg_0152"/>
<dbReference type="KEGG" id="llm:llmg_0152"/>
<dbReference type="eggNOG" id="COG3906">
    <property type="taxonomic scope" value="Bacteria"/>
</dbReference>
<dbReference type="HOGENOM" id="CLU_146610_2_1_9"/>
<dbReference type="OrthoDB" id="2086132at2"/>
<dbReference type="PhylomeDB" id="A2RHM3"/>
<dbReference type="Proteomes" id="UP000000364">
    <property type="component" value="Chromosome"/>
</dbReference>
<dbReference type="HAMAP" id="MF_01448">
    <property type="entry name" value="UPF0473"/>
    <property type="match status" value="1"/>
</dbReference>
<dbReference type="InterPro" id="IPR009711">
    <property type="entry name" value="UPF0473"/>
</dbReference>
<dbReference type="NCBIfam" id="NF010215">
    <property type="entry name" value="PRK13678.1-2"/>
    <property type="match status" value="1"/>
</dbReference>
<dbReference type="PANTHER" id="PTHR40066">
    <property type="entry name" value="UPF0473 PROTEIN CBO2561/CLC_2432"/>
    <property type="match status" value="1"/>
</dbReference>
<dbReference type="PANTHER" id="PTHR40066:SF1">
    <property type="entry name" value="UPF0473 PROTEIN CBO2561_CLC_2432"/>
    <property type="match status" value="1"/>
</dbReference>
<dbReference type="Pfam" id="PF06949">
    <property type="entry name" value="DUF1292"/>
    <property type="match status" value="1"/>
</dbReference>
<protein>
    <recommendedName>
        <fullName evidence="1">UPF0473 protein llmg_0152</fullName>
    </recommendedName>
</protein>
<evidence type="ECO:0000255" key="1">
    <source>
        <dbReference type="HAMAP-Rule" id="MF_01448"/>
    </source>
</evidence>
<reference key="1">
    <citation type="journal article" date="2007" name="J. Bacteriol.">
        <title>The complete genome sequence of the lactic acid bacterial paradigm Lactococcus lactis subsp. cremoris MG1363.</title>
        <authorList>
            <person name="Wegmann U."/>
            <person name="O'Connell-Motherway M."/>
            <person name="Zomer A."/>
            <person name="Buist G."/>
            <person name="Shearman C."/>
            <person name="Canchaya C."/>
            <person name="Ventura M."/>
            <person name="Goesmann A."/>
            <person name="Gasson M.J."/>
            <person name="Kuipers O.P."/>
            <person name="van Sinderen D."/>
            <person name="Kok J."/>
        </authorList>
    </citation>
    <scope>NUCLEOTIDE SEQUENCE [LARGE SCALE GENOMIC DNA]</scope>
    <source>
        <strain>MG1363</strain>
    </source>
</reference>
<feature type="chain" id="PRO_0000304842" description="UPF0473 protein llmg_0152">
    <location>
        <begin position="1"/>
        <end position="107"/>
    </location>
</feature>
<proteinExistence type="inferred from homology"/>
<gene>
    <name type="ordered locus">llmg_0152</name>
</gene>
<sequence>MTHTHDHEHDHNHEPDYITLVDENGNESLFQILITIDGQEEFGKNYVVLQPTEFEEDEQGLIDVLAYSFTENADGTEGDLQPIPEDAEDEWDMIEEVFNSFMDEQED</sequence>
<comment type="similarity">
    <text evidence="1">Belongs to the UPF0473 family.</text>
</comment>
<accession>A2RHM3</accession>
<organism>
    <name type="scientific">Lactococcus lactis subsp. cremoris (strain MG1363)</name>
    <dbReference type="NCBI Taxonomy" id="416870"/>
    <lineage>
        <taxon>Bacteria</taxon>
        <taxon>Bacillati</taxon>
        <taxon>Bacillota</taxon>
        <taxon>Bacilli</taxon>
        <taxon>Lactobacillales</taxon>
        <taxon>Streptococcaceae</taxon>
        <taxon>Lactococcus</taxon>
        <taxon>Lactococcus cremoris subsp. cremoris</taxon>
    </lineage>
</organism>